<accession>Q1ZXF0</accession>
<feature type="chain" id="PRO_0000327777" description="Probable DNA repair protein RAD51 homolog 4">
    <location>
        <begin position="1"/>
        <end position="354"/>
    </location>
</feature>
<feature type="binding site" evidence="2">
    <location>
        <begin position="115"/>
        <end position="122"/>
    </location>
    <ligand>
        <name>ATP</name>
        <dbReference type="ChEBI" id="CHEBI:30616"/>
    </ligand>
</feature>
<sequence length="354" mass="40822">MEEESISGLEVRFYQTQCLSEDNVIKFENNGYPMIDLILFSDAYQIQRNTSIPIETVTLIQRNLQRLFSSVPINGYQHYLDVKEFKTHYSSGIKLLDQLLGGNGFTSGEIYELVGNTSCGKTQISMCCSLNLSQQYNSNIIYIDSSNSFSPPRLIEIFKSNYLIKQRQKQQQKQQQKQHQKQQENNDKIEQDKILKILDRIKVFNCFDSITLLELLSTIDSTLSIISDEIPTFENQFYKGLKMVVIDSIGTLLAPIIGGKQTQGHYTMMMISRLIKYIADTYQIIFLITNNTVGGNSFDNKAALGEAWSMVPNHQLMINHQYNDDENEERSIYIEKSTRLPVSIIFIINLYWLF</sequence>
<keyword id="KW-0067">ATP-binding</keyword>
<keyword id="KW-0227">DNA damage</keyword>
<keyword id="KW-0233">DNA recombination</keyword>
<keyword id="KW-0234">DNA repair</keyword>
<keyword id="KW-0238">DNA-binding</keyword>
<keyword id="KW-0547">Nucleotide-binding</keyword>
<keyword id="KW-0539">Nucleus</keyword>
<keyword id="KW-1185">Reference proteome</keyword>
<name>RA51D_DICDI</name>
<comment type="function">
    <text evidence="1">Involved in the homologous recombination repair (HRR) pathway of double-stranded DNA breaks arising during DNA replication or induced by DNA-damaging agents.</text>
</comment>
<comment type="subcellular location">
    <subcellularLocation>
        <location evidence="1">Nucleus</location>
    </subcellularLocation>
</comment>
<comment type="similarity">
    <text evidence="3">Belongs to the RecA family. RAD51 subfamily.</text>
</comment>
<reference key="1">
    <citation type="journal article" date="2005" name="Nature">
        <title>The genome of the social amoeba Dictyostelium discoideum.</title>
        <authorList>
            <person name="Eichinger L."/>
            <person name="Pachebat J.A."/>
            <person name="Gloeckner G."/>
            <person name="Rajandream M.A."/>
            <person name="Sucgang R."/>
            <person name="Berriman M."/>
            <person name="Song J."/>
            <person name="Olsen R."/>
            <person name="Szafranski K."/>
            <person name="Xu Q."/>
            <person name="Tunggal B."/>
            <person name="Kummerfeld S."/>
            <person name="Madera M."/>
            <person name="Konfortov B.A."/>
            <person name="Rivero F."/>
            <person name="Bankier A.T."/>
            <person name="Lehmann R."/>
            <person name="Hamlin N."/>
            <person name="Davies R."/>
            <person name="Gaudet P."/>
            <person name="Fey P."/>
            <person name="Pilcher K."/>
            <person name="Chen G."/>
            <person name="Saunders D."/>
            <person name="Sodergren E.J."/>
            <person name="Davis P."/>
            <person name="Kerhornou A."/>
            <person name="Nie X."/>
            <person name="Hall N."/>
            <person name="Anjard C."/>
            <person name="Hemphill L."/>
            <person name="Bason N."/>
            <person name="Farbrother P."/>
            <person name="Desany B."/>
            <person name="Just E."/>
            <person name="Morio T."/>
            <person name="Rost R."/>
            <person name="Churcher C.M."/>
            <person name="Cooper J."/>
            <person name="Haydock S."/>
            <person name="van Driessche N."/>
            <person name="Cronin A."/>
            <person name="Goodhead I."/>
            <person name="Muzny D.M."/>
            <person name="Mourier T."/>
            <person name="Pain A."/>
            <person name="Lu M."/>
            <person name="Harper D."/>
            <person name="Lindsay R."/>
            <person name="Hauser H."/>
            <person name="James K.D."/>
            <person name="Quiles M."/>
            <person name="Madan Babu M."/>
            <person name="Saito T."/>
            <person name="Buchrieser C."/>
            <person name="Wardroper A."/>
            <person name="Felder M."/>
            <person name="Thangavelu M."/>
            <person name="Johnson D."/>
            <person name="Knights A."/>
            <person name="Loulseged H."/>
            <person name="Mungall K.L."/>
            <person name="Oliver K."/>
            <person name="Price C."/>
            <person name="Quail M.A."/>
            <person name="Urushihara H."/>
            <person name="Hernandez J."/>
            <person name="Rabbinowitsch E."/>
            <person name="Steffen D."/>
            <person name="Sanders M."/>
            <person name="Ma J."/>
            <person name="Kohara Y."/>
            <person name="Sharp S."/>
            <person name="Simmonds M.N."/>
            <person name="Spiegler S."/>
            <person name="Tivey A."/>
            <person name="Sugano S."/>
            <person name="White B."/>
            <person name="Walker D."/>
            <person name="Woodward J.R."/>
            <person name="Winckler T."/>
            <person name="Tanaka Y."/>
            <person name="Shaulsky G."/>
            <person name="Schleicher M."/>
            <person name="Weinstock G.M."/>
            <person name="Rosenthal A."/>
            <person name="Cox E.C."/>
            <person name="Chisholm R.L."/>
            <person name="Gibbs R.A."/>
            <person name="Loomis W.F."/>
            <person name="Platzer M."/>
            <person name="Kay R.R."/>
            <person name="Williams J.G."/>
            <person name="Dear P.H."/>
            <person name="Noegel A.A."/>
            <person name="Barrell B.G."/>
            <person name="Kuspa A."/>
        </authorList>
    </citation>
    <scope>NUCLEOTIDE SEQUENCE [LARGE SCALE GENOMIC DNA]</scope>
    <source>
        <strain>AX4</strain>
    </source>
</reference>
<protein>
    <recommendedName>
        <fullName>Probable DNA repair protein RAD51 homolog 4</fullName>
    </recommendedName>
</protein>
<dbReference type="EMBL" id="AAFI02000077">
    <property type="protein sequence ID" value="EAS66855.1"/>
    <property type="molecule type" value="Genomic_DNA"/>
</dbReference>
<dbReference type="RefSeq" id="XP_001134538.1">
    <property type="nucleotide sequence ID" value="XM_001134538.1"/>
</dbReference>
<dbReference type="SMR" id="Q1ZXF0"/>
<dbReference type="FunCoup" id="Q1ZXF0">
    <property type="interactions" value="129"/>
</dbReference>
<dbReference type="STRING" id="44689.Q1ZXF0"/>
<dbReference type="PaxDb" id="44689-DDB0232317"/>
<dbReference type="EnsemblProtists" id="EAS66855">
    <property type="protein sequence ID" value="EAS66855"/>
    <property type="gene ID" value="DDB_G0285287"/>
</dbReference>
<dbReference type="GeneID" id="8625032"/>
<dbReference type="KEGG" id="ddi:DDB_G0285287"/>
<dbReference type="dictyBase" id="DDB_G0285287"/>
<dbReference type="VEuPathDB" id="AmoebaDB:DDB_G0285287"/>
<dbReference type="eggNOG" id="KOG1433">
    <property type="taxonomic scope" value="Eukaryota"/>
</dbReference>
<dbReference type="HOGENOM" id="CLU_783966_0_0_1"/>
<dbReference type="InParanoid" id="Q1ZXF0"/>
<dbReference type="OMA" id="QRIHTFR"/>
<dbReference type="PhylomeDB" id="Q1ZXF0"/>
<dbReference type="PRO" id="PR:Q1ZXF0"/>
<dbReference type="Proteomes" id="UP000002195">
    <property type="component" value="Chromosome 4"/>
</dbReference>
<dbReference type="GO" id="GO:0005815">
    <property type="term" value="C:microtubule organizing center"/>
    <property type="evidence" value="ECO:0000318"/>
    <property type="project" value="GO_Central"/>
</dbReference>
<dbReference type="GO" id="GO:0005634">
    <property type="term" value="C:nucleus"/>
    <property type="evidence" value="ECO:0000250"/>
    <property type="project" value="dictyBase"/>
</dbReference>
<dbReference type="GO" id="GO:0033063">
    <property type="term" value="C:Rad51B-Rad51C-Rad51D-XRCC2 complex"/>
    <property type="evidence" value="ECO:0000318"/>
    <property type="project" value="GO_Central"/>
</dbReference>
<dbReference type="GO" id="GO:0005657">
    <property type="term" value="C:replication fork"/>
    <property type="evidence" value="ECO:0000318"/>
    <property type="project" value="GO_Central"/>
</dbReference>
<dbReference type="GO" id="GO:0005524">
    <property type="term" value="F:ATP binding"/>
    <property type="evidence" value="ECO:0007669"/>
    <property type="project" value="UniProtKB-KW"/>
</dbReference>
<dbReference type="GO" id="GO:0008094">
    <property type="term" value="F:ATP-dependent activity, acting on DNA"/>
    <property type="evidence" value="ECO:0000318"/>
    <property type="project" value="GO_Central"/>
</dbReference>
<dbReference type="GO" id="GO:0140664">
    <property type="term" value="F:ATP-dependent DNA damage sensor activity"/>
    <property type="evidence" value="ECO:0007669"/>
    <property type="project" value="InterPro"/>
</dbReference>
<dbReference type="GO" id="GO:0003677">
    <property type="term" value="F:DNA binding"/>
    <property type="evidence" value="ECO:0000250"/>
    <property type="project" value="dictyBase"/>
</dbReference>
<dbReference type="GO" id="GO:0003697">
    <property type="term" value="F:single-stranded DNA binding"/>
    <property type="evidence" value="ECO:0000318"/>
    <property type="project" value="GO_Central"/>
</dbReference>
<dbReference type="GO" id="GO:0006281">
    <property type="term" value="P:DNA repair"/>
    <property type="evidence" value="ECO:0000250"/>
    <property type="project" value="dictyBase"/>
</dbReference>
<dbReference type="GO" id="GO:0042148">
    <property type="term" value="P:DNA strand invasion"/>
    <property type="evidence" value="ECO:0000318"/>
    <property type="project" value="GO_Central"/>
</dbReference>
<dbReference type="GO" id="GO:0000724">
    <property type="term" value="P:double-strand break repair via homologous recombination"/>
    <property type="evidence" value="ECO:0000318"/>
    <property type="project" value="GO_Central"/>
</dbReference>
<dbReference type="GO" id="GO:0007131">
    <property type="term" value="P:reciprocal meiotic recombination"/>
    <property type="evidence" value="ECO:0000318"/>
    <property type="project" value="GO_Central"/>
</dbReference>
<dbReference type="GO" id="GO:0000723">
    <property type="term" value="P:telomere maintenance"/>
    <property type="evidence" value="ECO:0000318"/>
    <property type="project" value="GO_Central"/>
</dbReference>
<dbReference type="CDD" id="cd19489">
    <property type="entry name" value="Rad51D"/>
    <property type="match status" value="1"/>
</dbReference>
<dbReference type="FunFam" id="3.40.50.300:FF:001665">
    <property type="entry name" value="DNA repair protein RAD51 4"/>
    <property type="match status" value="1"/>
</dbReference>
<dbReference type="Gene3D" id="3.40.50.300">
    <property type="entry name" value="P-loop containing nucleotide triphosphate hydrolases"/>
    <property type="match status" value="1"/>
</dbReference>
<dbReference type="InterPro" id="IPR013632">
    <property type="entry name" value="DNA_recomb/repair_Rad51_C"/>
</dbReference>
<dbReference type="InterPro" id="IPR051988">
    <property type="entry name" value="HRR_RAD51_Paralog"/>
</dbReference>
<dbReference type="InterPro" id="IPR027417">
    <property type="entry name" value="P-loop_NTPase"/>
</dbReference>
<dbReference type="InterPro" id="IPR047323">
    <property type="entry name" value="Rad51D_C"/>
</dbReference>
<dbReference type="InterPro" id="IPR020588">
    <property type="entry name" value="RecA_ATP-bd"/>
</dbReference>
<dbReference type="PANTHER" id="PTHR46457">
    <property type="entry name" value="DNA REPAIR PROTEIN RAD51 HOMOLOG 4"/>
    <property type="match status" value="1"/>
</dbReference>
<dbReference type="PANTHER" id="PTHR46457:SF1">
    <property type="entry name" value="DNA REPAIR PROTEIN RAD51 HOMOLOG 4"/>
    <property type="match status" value="1"/>
</dbReference>
<dbReference type="Pfam" id="PF08423">
    <property type="entry name" value="Rad51"/>
    <property type="match status" value="1"/>
</dbReference>
<dbReference type="SUPFAM" id="SSF52540">
    <property type="entry name" value="P-loop containing nucleoside triphosphate hydrolases"/>
    <property type="match status" value="1"/>
</dbReference>
<dbReference type="PROSITE" id="PS50162">
    <property type="entry name" value="RECA_2"/>
    <property type="match status" value="1"/>
</dbReference>
<organism>
    <name type="scientific">Dictyostelium discoideum</name>
    <name type="common">Social amoeba</name>
    <dbReference type="NCBI Taxonomy" id="44689"/>
    <lineage>
        <taxon>Eukaryota</taxon>
        <taxon>Amoebozoa</taxon>
        <taxon>Evosea</taxon>
        <taxon>Eumycetozoa</taxon>
        <taxon>Dictyostelia</taxon>
        <taxon>Dictyosteliales</taxon>
        <taxon>Dictyosteliaceae</taxon>
        <taxon>Dictyostelium</taxon>
    </lineage>
</organism>
<gene>
    <name type="primary">rad51d</name>
    <name type="ORF">DDB_G0285287</name>
</gene>
<proteinExistence type="inferred from homology"/>
<evidence type="ECO:0000250" key="1"/>
<evidence type="ECO:0000255" key="2"/>
<evidence type="ECO:0000305" key="3"/>